<sequence>MAAIASTLSLSSTKPQRLFDSSFHGSAISAAPISIGLKPRSFSVRATTAGYDLNAFTFDPIKESIVSREMTRRYMTDMITYAETDVVVVGAGSAGLSAAYEISKNPNVQVAIIEQSVSPGGGAWLGGQLFSAMIVRKPAHLFLDEIGVAYDEQDTYVVVKHAALFTSTIMSKLLARPNVKLFNAVAAEDLIVKGNRVGGVVTNWALVAQNHHTQSCMDPNVMEAKIVVSSCGHDGPFGATGVKRLKSIGMIDHVPGMKALDMNTAEDAIVRLTREVVPGMIVTGMEVAEIDGAPRMGPTFGAMMISGQKAGQLALKALGLPNAIDGTLVGNLSPELVLAAADSAETVDA</sequence>
<protein>
    <recommendedName>
        <fullName evidence="2">Thiamine thiazole synthase, chloroplastic</fullName>
        <ecNumber evidence="14">2.4.2.60</ecNumber>
    </recommendedName>
    <alternativeName>
        <fullName evidence="2">Thiazole biosynthetic enzyme</fullName>
    </alternativeName>
</protein>
<accession>Q38814</accession>
<dbReference type="EC" id="2.4.2.60" evidence="14"/>
<dbReference type="EMBL" id="U17589">
    <property type="protein sequence ID" value="AAC97124.1"/>
    <property type="molecule type" value="mRNA"/>
</dbReference>
<dbReference type="EMBL" id="AB005232">
    <property type="protein sequence ID" value="BAB08756.1"/>
    <property type="molecule type" value="Genomic_DNA"/>
</dbReference>
<dbReference type="EMBL" id="CP002688">
    <property type="protein sequence ID" value="AED96539.1"/>
    <property type="molecule type" value="Genomic_DNA"/>
</dbReference>
<dbReference type="EMBL" id="AF419604">
    <property type="protein sequence ID" value="AAL31936.1"/>
    <property type="molecule type" value="mRNA"/>
</dbReference>
<dbReference type="EMBL" id="AF428355">
    <property type="protein sequence ID" value="AAL16285.1"/>
    <property type="molecule type" value="mRNA"/>
</dbReference>
<dbReference type="EMBL" id="AF428385">
    <property type="protein sequence ID" value="AAL16153.1"/>
    <property type="molecule type" value="mRNA"/>
</dbReference>
<dbReference type="EMBL" id="AY054216">
    <property type="protein sequence ID" value="AAL06876.1"/>
    <property type="molecule type" value="mRNA"/>
</dbReference>
<dbReference type="EMBL" id="AY058094">
    <property type="protein sequence ID" value="AAL24202.1"/>
    <property type="molecule type" value="mRNA"/>
</dbReference>
<dbReference type="EMBL" id="AY143082">
    <property type="protein sequence ID" value="AAN12914.1"/>
    <property type="molecule type" value="mRNA"/>
</dbReference>
<dbReference type="PIR" id="S71191">
    <property type="entry name" value="S71191"/>
</dbReference>
<dbReference type="RefSeq" id="NP_200288.1">
    <molecule id="Q38814-1"/>
    <property type="nucleotide sequence ID" value="NM_124858.4"/>
</dbReference>
<dbReference type="PDB" id="1RP0">
    <property type="method" value="X-ray"/>
    <property type="resolution" value="1.60 A"/>
    <property type="chains" value="A/B=49-328"/>
</dbReference>
<dbReference type="PDBsum" id="1RP0"/>
<dbReference type="SMR" id="Q38814"/>
<dbReference type="BioGRID" id="20811">
    <property type="interactions" value="7"/>
</dbReference>
<dbReference type="FunCoup" id="Q38814">
    <property type="interactions" value="820"/>
</dbReference>
<dbReference type="IntAct" id="Q38814">
    <property type="interactions" value="1"/>
</dbReference>
<dbReference type="STRING" id="3702.Q38814"/>
<dbReference type="iPTMnet" id="Q38814"/>
<dbReference type="MetOSite" id="Q38814"/>
<dbReference type="PaxDb" id="3702-AT5G54770.1"/>
<dbReference type="ProteomicsDB" id="234286">
    <molecule id="Q38814-1"/>
</dbReference>
<dbReference type="EnsemblPlants" id="AT5G54770.1">
    <molecule id="Q38814-1"/>
    <property type="protein sequence ID" value="AT5G54770.1"/>
    <property type="gene ID" value="AT5G54770"/>
</dbReference>
<dbReference type="GeneID" id="835567"/>
<dbReference type="Gramene" id="AT5G54770.1">
    <molecule id="Q38814-1"/>
    <property type="protein sequence ID" value="AT5G54770.1"/>
    <property type="gene ID" value="AT5G54770"/>
</dbReference>
<dbReference type="KEGG" id="ath:AT5G54770"/>
<dbReference type="Araport" id="AT5G54770"/>
<dbReference type="TAIR" id="AT5G54770">
    <property type="gene designation" value="THI1"/>
</dbReference>
<dbReference type="eggNOG" id="KOG2960">
    <property type="taxonomic scope" value="Eukaryota"/>
</dbReference>
<dbReference type="HOGENOM" id="CLU_053727_1_0_1"/>
<dbReference type="InParanoid" id="Q38814"/>
<dbReference type="OMA" id="MFPRIVV"/>
<dbReference type="PhylomeDB" id="Q38814"/>
<dbReference type="BioCyc" id="MetaCyc:AT5G54770-MONOMER"/>
<dbReference type="BRENDA" id="2.4.2.60">
    <property type="organism ID" value="399"/>
</dbReference>
<dbReference type="CD-CODE" id="4299E36E">
    <property type="entry name" value="Nucleolus"/>
</dbReference>
<dbReference type="EvolutionaryTrace" id="Q38814"/>
<dbReference type="PRO" id="PR:Q38814"/>
<dbReference type="Proteomes" id="UP000006548">
    <property type="component" value="Chromosome 5"/>
</dbReference>
<dbReference type="ExpressionAtlas" id="Q38814">
    <property type="expression patterns" value="baseline and differential"/>
</dbReference>
<dbReference type="GO" id="GO:0009507">
    <property type="term" value="C:chloroplast"/>
    <property type="evidence" value="ECO:0000314"/>
    <property type="project" value="TAIR"/>
</dbReference>
<dbReference type="GO" id="GO:0009941">
    <property type="term" value="C:chloroplast envelope"/>
    <property type="evidence" value="ECO:0007005"/>
    <property type="project" value="TAIR"/>
</dbReference>
<dbReference type="GO" id="GO:0009570">
    <property type="term" value="C:chloroplast stroma"/>
    <property type="evidence" value="ECO:0007005"/>
    <property type="project" value="TAIR"/>
</dbReference>
<dbReference type="GO" id="GO:0005829">
    <property type="term" value="C:cytosol"/>
    <property type="evidence" value="ECO:0007669"/>
    <property type="project" value="UniProtKB-UniRule"/>
</dbReference>
<dbReference type="GO" id="GO:0005739">
    <property type="term" value="C:mitochondrion"/>
    <property type="evidence" value="ECO:0000314"/>
    <property type="project" value="TAIR"/>
</dbReference>
<dbReference type="GO" id="GO:0005886">
    <property type="term" value="C:plasma membrane"/>
    <property type="evidence" value="ECO:0007669"/>
    <property type="project" value="UniProtKB-SubCell"/>
</dbReference>
<dbReference type="GO" id="GO:0009536">
    <property type="term" value="C:plastid"/>
    <property type="evidence" value="ECO:0007005"/>
    <property type="project" value="TAIR"/>
</dbReference>
<dbReference type="GO" id="GO:0010319">
    <property type="term" value="C:stromule"/>
    <property type="evidence" value="ECO:0000314"/>
    <property type="project" value="TAIR"/>
</dbReference>
<dbReference type="GO" id="GO:0009579">
    <property type="term" value="C:thylakoid"/>
    <property type="evidence" value="ECO:0007005"/>
    <property type="project" value="TAIR"/>
</dbReference>
<dbReference type="GO" id="GO:0160205">
    <property type="term" value="F:cysteine-dependent adenosine diphosphate thiazole synthase activity"/>
    <property type="evidence" value="ECO:0007669"/>
    <property type="project" value="UniProtKB-EC"/>
</dbReference>
<dbReference type="GO" id="GO:0005506">
    <property type="term" value="F:iron ion binding"/>
    <property type="evidence" value="ECO:0007669"/>
    <property type="project" value="UniProtKB-UniRule"/>
</dbReference>
<dbReference type="GO" id="GO:0019904">
    <property type="term" value="F:protein domain specific binding"/>
    <property type="evidence" value="ECO:0000353"/>
    <property type="project" value="CAFA"/>
</dbReference>
<dbReference type="GO" id="GO:0042803">
    <property type="term" value="F:protein homodimerization activity"/>
    <property type="evidence" value="ECO:0000353"/>
    <property type="project" value="TAIR"/>
</dbReference>
<dbReference type="GO" id="GO:0008270">
    <property type="term" value="F:zinc ion binding"/>
    <property type="evidence" value="ECO:0007005"/>
    <property type="project" value="TAIR"/>
</dbReference>
<dbReference type="GO" id="GO:0006974">
    <property type="term" value="P:DNA damage response"/>
    <property type="evidence" value="ECO:0000315"/>
    <property type="project" value="TAIR"/>
</dbReference>
<dbReference type="GO" id="GO:0018131">
    <property type="term" value="P:oxazole or thiazole biosynthetic process"/>
    <property type="evidence" value="ECO:0000316"/>
    <property type="project" value="TAIR"/>
</dbReference>
<dbReference type="GO" id="GO:0009409">
    <property type="term" value="P:response to cold"/>
    <property type="evidence" value="ECO:0000270"/>
    <property type="project" value="TAIR"/>
</dbReference>
<dbReference type="GO" id="GO:0009228">
    <property type="term" value="P:thiamine biosynthetic process"/>
    <property type="evidence" value="ECO:0000316"/>
    <property type="project" value="TAIR"/>
</dbReference>
<dbReference type="GO" id="GO:0052837">
    <property type="term" value="P:thiazole biosynthetic process"/>
    <property type="evidence" value="ECO:0007669"/>
    <property type="project" value="UniProtKB-UniRule"/>
</dbReference>
<dbReference type="FunFam" id="3.50.50.60:FF:000070">
    <property type="entry name" value="Thiamine thiazole synthase, chloroplastic"/>
    <property type="match status" value="1"/>
</dbReference>
<dbReference type="Gene3D" id="6.10.250.2840">
    <property type="match status" value="1"/>
</dbReference>
<dbReference type="Gene3D" id="3.50.50.60">
    <property type="entry name" value="FAD/NAD(P)-binding domain"/>
    <property type="match status" value="1"/>
</dbReference>
<dbReference type="HAMAP" id="MF_03158">
    <property type="entry name" value="THI4"/>
    <property type="match status" value="1"/>
</dbReference>
<dbReference type="InterPro" id="IPR036188">
    <property type="entry name" value="FAD/NAD-bd_sf"/>
</dbReference>
<dbReference type="InterPro" id="IPR027495">
    <property type="entry name" value="Sti35"/>
</dbReference>
<dbReference type="InterPro" id="IPR002922">
    <property type="entry name" value="Thi4_fam"/>
</dbReference>
<dbReference type="NCBIfam" id="TIGR00292">
    <property type="entry name" value="sulfide-dependent adenosine diphosphate thiazole synthase"/>
    <property type="match status" value="1"/>
</dbReference>
<dbReference type="PANTHER" id="PTHR43422">
    <property type="entry name" value="THIAMINE THIAZOLE SYNTHASE"/>
    <property type="match status" value="1"/>
</dbReference>
<dbReference type="PANTHER" id="PTHR43422:SF3">
    <property type="entry name" value="THIAMINE THIAZOLE SYNTHASE"/>
    <property type="match status" value="1"/>
</dbReference>
<dbReference type="Pfam" id="PF01946">
    <property type="entry name" value="Thi4"/>
    <property type="match status" value="1"/>
</dbReference>
<dbReference type="SUPFAM" id="SSF51905">
    <property type="entry name" value="FAD/NAD(P)-binding domain"/>
    <property type="match status" value="1"/>
</dbReference>
<reference key="1">
    <citation type="journal article" date="1996" name="Plant Mol. Biol.">
        <title>Thi1, a thiamine biosynthetic gene in Arabidopsis thaliana, complements bacterial defects in DNA repair.</title>
        <authorList>
            <person name="Machado C.R."/>
            <person name="de Oliveira R.L."/>
            <person name="Boiteux S."/>
            <person name="Praekelt U.M."/>
            <person name="Meacock P.A."/>
            <person name="Menck C.F."/>
        </authorList>
    </citation>
    <scope>NUCLEOTIDE SEQUENCE [MRNA] (ISOFORM CHLOROPLASTIC)</scope>
    <scope>FUNCTION</scope>
    <scope>CATALYTIC ACTIVITY</scope>
    <source>
        <strain>cv. Columbia</strain>
    </source>
</reference>
<reference key="2">
    <citation type="journal article" date="1997" name="DNA Res.">
        <title>Structural analysis of Arabidopsis thaliana chromosome 5. I. Sequence features of the 1.6 Mb regions covered by twenty physically assigned P1 clones.</title>
        <authorList>
            <person name="Sato S."/>
            <person name="Kotani H."/>
            <person name="Nakamura Y."/>
            <person name="Kaneko T."/>
            <person name="Asamizu E."/>
            <person name="Fukami M."/>
            <person name="Miyajima N."/>
            <person name="Tabata S."/>
        </authorList>
    </citation>
    <scope>NUCLEOTIDE SEQUENCE [LARGE SCALE GENOMIC DNA]</scope>
    <source>
        <strain>cv. Columbia</strain>
    </source>
</reference>
<reference key="3">
    <citation type="journal article" date="2017" name="Plant J.">
        <title>Araport11: a complete reannotation of the Arabidopsis thaliana reference genome.</title>
        <authorList>
            <person name="Cheng C.Y."/>
            <person name="Krishnakumar V."/>
            <person name="Chan A.P."/>
            <person name="Thibaud-Nissen F."/>
            <person name="Schobel S."/>
            <person name="Town C.D."/>
        </authorList>
    </citation>
    <scope>GENOME REANNOTATION</scope>
    <source>
        <strain>cv. Columbia</strain>
    </source>
</reference>
<reference key="4">
    <citation type="journal article" date="2003" name="Science">
        <title>Empirical analysis of transcriptional activity in the Arabidopsis genome.</title>
        <authorList>
            <person name="Yamada K."/>
            <person name="Lim J."/>
            <person name="Dale J.M."/>
            <person name="Chen H."/>
            <person name="Shinn P."/>
            <person name="Palm C.J."/>
            <person name="Southwick A.M."/>
            <person name="Wu H.C."/>
            <person name="Kim C.J."/>
            <person name="Nguyen M."/>
            <person name="Pham P.K."/>
            <person name="Cheuk R.F."/>
            <person name="Karlin-Newmann G."/>
            <person name="Liu S.X."/>
            <person name="Lam B."/>
            <person name="Sakano H."/>
            <person name="Wu T."/>
            <person name="Yu G."/>
            <person name="Miranda M."/>
            <person name="Quach H.L."/>
            <person name="Tripp M."/>
            <person name="Chang C.H."/>
            <person name="Lee J.M."/>
            <person name="Toriumi M.J."/>
            <person name="Chan M.M."/>
            <person name="Tang C.C."/>
            <person name="Onodera C.S."/>
            <person name="Deng J.M."/>
            <person name="Akiyama K."/>
            <person name="Ansari Y."/>
            <person name="Arakawa T."/>
            <person name="Banh J."/>
            <person name="Banno F."/>
            <person name="Bowser L."/>
            <person name="Brooks S.Y."/>
            <person name="Carninci P."/>
            <person name="Chao Q."/>
            <person name="Choy N."/>
            <person name="Enju A."/>
            <person name="Goldsmith A.D."/>
            <person name="Gurjal M."/>
            <person name="Hansen N.F."/>
            <person name="Hayashizaki Y."/>
            <person name="Johnson-Hopson C."/>
            <person name="Hsuan V.W."/>
            <person name="Iida K."/>
            <person name="Karnes M."/>
            <person name="Khan S."/>
            <person name="Koesema E."/>
            <person name="Ishida J."/>
            <person name="Jiang P.X."/>
            <person name="Jones T."/>
            <person name="Kawai J."/>
            <person name="Kamiya A."/>
            <person name="Meyers C."/>
            <person name="Nakajima M."/>
            <person name="Narusaka M."/>
            <person name="Seki M."/>
            <person name="Sakurai T."/>
            <person name="Satou M."/>
            <person name="Tamse R."/>
            <person name="Vaysberg M."/>
            <person name="Wallender E.K."/>
            <person name="Wong C."/>
            <person name="Yamamura Y."/>
            <person name="Yuan S."/>
            <person name="Shinozaki K."/>
            <person name="Davis R.W."/>
            <person name="Theologis A."/>
            <person name="Ecker J.R."/>
        </authorList>
    </citation>
    <scope>NUCLEOTIDE SEQUENCE [LARGE SCALE MRNA] (ISOFORM CHLOROPLASTIC)</scope>
    <source>
        <strain>cv. Columbia</strain>
    </source>
</reference>
<reference key="5">
    <citation type="journal article" date="1996" name="Plant J.">
        <title>Identification of agthi1, whose product is involved in biosynthesis of the thiamine precursor thiazole, in actinorhizal nodules of Alnus glutinosa.</title>
        <authorList>
            <person name="Ribeiro A."/>
            <person name="Praekelt U."/>
            <person name="Akkermans A.D.L."/>
            <person name="Meacock P.A."/>
            <person name="van Kammen A."/>
            <person name="Bisseling T."/>
            <person name="Pawlowski K."/>
        </authorList>
    </citation>
    <scope>TISSUE SPECIFICITY</scope>
</reference>
<reference key="6">
    <citation type="journal article" date="2001" name="Plant Mol. Biol.">
        <title>Dual targeting properties of the N-terminal signal sequence of Arabidopsis thaliana THI1 protein to mitochondria and chloroplasts.</title>
        <authorList>
            <person name="Chabregas S.M."/>
            <person name="Luche D.D."/>
            <person name="Farias L.P."/>
            <person name="Ribeiro A.F."/>
            <person name="van Sluys M.A."/>
            <person name="Menck C.F."/>
            <person name="Silva-Filho M.C."/>
        </authorList>
    </citation>
    <scope>SUBCELLULAR LOCATION</scope>
    <scope>ALTERNATIVE INITIATION</scope>
</reference>
<reference key="7">
    <citation type="journal article" date="2003" name="J. Cell Sci.">
        <title>Differential usage of two in-frame translational start codons regulates subcellular localization of Arabidopsis thaliana THI1.</title>
        <authorList>
            <person name="Chabregas S.M."/>
            <person name="Luche D.D."/>
            <person name="Van Sluys M.A."/>
            <person name="Menck C.F."/>
            <person name="Silva-Filho M.C."/>
        </authorList>
    </citation>
    <scope>ALTERNATIVE INITIATION</scope>
    <scope>SUBCELLULAR LOCATION</scope>
    <scope>MUTAGENESIS OF MET-1 AND MET-70</scope>
</reference>
<reference key="8">
    <citation type="journal article" date="2003" name="Plant Cell Physiol.">
        <title>Point mutation is responsible for Arabidopsis tz-201 mutant phenotype affecting thiamin biosynthesis.</title>
        <authorList>
            <person name="Papini-Terzi F.S."/>
            <person name="Galhardo R.S."/>
            <person name="Farias L.P."/>
            <person name="Menck C.F."/>
            <person name="Van Sluys M.A."/>
        </authorList>
    </citation>
    <scope>FUNCTION</scope>
    <scope>MUTAGENESIS OF ALA-184</scope>
    <scope>INDUCTION</scope>
    <scope>TISSUE SPECIFICITY</scope>
</reference>
<reference key="9">
    <citation type="journal article" date="2005" name="J. Exp. Bot.">
        <title>Functional characterization of the thi1 promoter region from Arabidopsis thaliana.</title>
        <authorList>
            <person name="Ribeiro D.T."/>
            <person name="Farias L.P."/>
            <person name="de Almeida J.D."/>
            <person name="Kashiwabara P.M."/>
            <person name="Ribeiro A.F."/>
            <person name="Silva-Filho M.C."/>
            <person name="Menck C.F."/>
            <person name="Van Sluys M.A."/>
        </authorList>
    </citation>
    <scope>DEVELOPMENTAL STAGE</scope>
    <scope>TISSUE SPECIFICITY</scope>
    <scope>INDUCTION</scope>
</reference>
<reference key="10">
    <citation type="journal article" date="2008" name="PLoS ONE">
        <title>Sorting signals, N-terminal modifications and abundance of the chloroplast proteome.</title>
        <authorList>
            <person name="Zybailov B."/>
            <person name="Rutschow H."/>
            <person name="Friso G."/>
            <person name="Rudella A."/>
            <person name="Emanuelsson O."/>
            <person name="Sun Q."/>
            <person name="van Wijk K.J."/>
        </authorList>
    </citation>
    <scope>IDENTIFICATION BY MASS SPECTROMETRY</scope>
    <scope>SUBCELLULAR LOCATION [LARGE SCALE ANALYSIS]</scope>
</reference>
<reference key="11">
    <citation type="journal article" date="2011" name="Nature">
        <title>Saccharomyces cerevisiae THI4p is a suicide thiamine thiazole synthase.</title>
        <authorList>
            <person name="Chatterjee A."/>
            <person name="Abeydeera N.D."/>
            <person name="Bale S."/>
            <person name="Pai P.J."/>
            <person name="Dorrestein P.C."/>
            <person name="Russell D.H."/>
            <person name="Ealick S.E."/>
            <person name="Begley T.P."/>
        </authorList>
    </citation>
    <scope>DIDEHYDROALANINE FORMATION AT CYS-216</scope>
</reference>
<reference key="12">
    <citation type="journal article" date="2011" name="Plant Mol. Biol.">
        <title>Initial characteristics of RbcX proteins from Arabidopsis thaliana.</title>
        <authorList>
            <person name="Kolesinski P."/>
            <person name="Piechota J."/>
            <person name="Szczepaniak A."/>
        </authorList>
    </citation>
    <scope>INTERACTION WITH RBCX1 AND RBCX2</scope>
</reference>
<reference key="13">
    <citation type="journal article" date="2012" name="BMC Plant Biol.">
        <title>The upregulation of thiamine (vitamin B1) biosynthesis in Arabidopsis thaliana seedlings under salt and osmotic stress conditions is mediated by abscisic acid at the early stages of this stress response.</title>
        <authorList>
            <person name="Rapala-Kozik M."/>
            <person name="Wolak N."/>
            <person name="Kujda M."/>
            <person name="Banas A.K."/>
        </authorList>
    </citation>
    <scope>INDUCTION</scope>
</reference>
<reference key="14">
    <citation type="journal article" date="2012" name="J. Proteome Res.">
        <title>Identification of phosphoproteins in Arabidopsis thaliana leaves using polyethylene glycol fractionation, immobilized metal-ion affinity chromatography, two-dimensional gel electrophoresis and mass spectrometry.</title>
        <authorList>
            <person name="Aryal U.K."/>
            <person name="Krochko J.E."/>
            <person name="Ross A.R."/>
        </authorList>
    </citation>
    <scope>IDENTIFICATION BY MASS SPECTROMETRY [LARGE SCALE ANALYSIS]</scope>
</reference>
<reference key="15">
    <citation type="journal article" date="2014" name="Biochim. Biophys. Acta">
        <title>THI1, a protein involved in the biosynthesis of thiamin in Arabidopsis thaliana: structural analysis of THI1(A140V) mutant.</title>
        <authorList>
            <person name="Garcia A.F."/>
            <person name="Dyszy F."/>
            <person name="Munte C.E."/>
            <person name="Demarco R."/>
            <person name="Beltramini L.M."/>
            <person name="Oliva G."/>
            <person name="Costa-Filho A.J."/>
            <person name="Araujo A.P."/>
        </authorList>
    </citation>
    <scope>FUNCTION</scope>
    <scope>SUBUNIT</scope>
    <scope>MUTAGENESIS OF ALA-184</scope>
    <scope>DIDEHYDROALANINE FORMATION AT CYS-216</scope>
</reference>
<reference key="16">
    <citation type="journal article" date="2016" name="Plant Physiol.">
        <title>THI1, a thiamine thiazole synthase, interacts with Ca2+-dependent protein kinase CPK33 and modulates the S-type anion channels and stomatal closure in Arabidopsis.</title>
        <authorList>
            <person name="Li C.L."/>
            <person name="Wang M."/>
            <person name="Wu X.M."/>
            <person name="Chen D.H."/>
            <person name="Lv H.J."/>
            <person name="Shen J.L."/>
            <person name="Qiao Z."/>
            <person name="Zhang W."/>
        </authorList>
    </citation>
    <scope>FUNCTION</scope>
    <scope>TISSUE SPECIFICITY</scope>
    <scope>INDUCTION BY ABSCISIC ACID AND DROUGHT</scope>
    <scope>SUBCELLULAR LOCATION</scope>
    <scope>INTERACTION WITH CPK33</scope>
    <scope>LACK OF PHOSPHORYLATION</scope>
</reference>
<reference key="17">
    <citation type="journal article" date="2006" name="J. Biol. Chem.">
        <title>Structure of the thiazole biosynthetic enzyme THI1 from Arabidopsis thaliana.</title>
        <authorList>
            <person name="Godoi P.H."/>
            <person name="Galhardo R.S."/>
            <person name="Luche D.D."/>
            <person name="Van Sluys M.A."/>
            <person name="Menck C.F."/>
            <person name="Oliva G."/>
        </authorList>
    </citation>
    <scope>X-RAY CRYSTALLOGRAPHY (1.6 ANGSTROMS) OF 49-328 IN COMPLEX WITH ADT</scope>
    <scope>SUBUNIT</scope>
    <scope>MUTAGENESIS OF ASP-77; ASP-85; GLY-121; TRP-124; LYS-172; ALA-184; HIS-211 AND GLU-266</scope>
</reference>
<organism>
    <name type="scientific">Arabidopsis thaliana</name>
    <name type="common">Mouse-ear cress</name>
    <dbReference type="NCBI Taxonomy" id="3702"/>
    <lineage>
        <taxon>Eukaryota</taxon>
        <taxon>Viridiplantae</taxon>
        <taxon>Streptophyta</taxon>
        <taxon>Embryophyta</taxon>
        <taxon>Tracheophyta</taxon>
        <taxon>Spermatophyta</taxon>
        <taxon>Magnoliopsida</taxon>
        <taxon>eudicotyledons</taxon>
        <taxon>Gunneridae</taxon>
        <taxon>Pentapetalae</taxon>
        <taxon>rosids</taxon>
        <taxon>malvids</taxon>
        <taxon>Brassicales</taxon>
        <taxon>Brassicaceae</taxon>
        <taxon>Camelineae</taxon>
        <taxon>Arabidopsis</taxon>
    </lineage>
</organism>
<gene>
    <name evidence="2" type="primary">THI1</name>
    <name type="synonym">ARA6</name>
    <name type="synonym">THI4</name>
    <name type="ordered locus">At5g54770</name>
    <name type="ORF">MBG8.3</name>
</gene>
<keyword id="KW-0002">3D-structure</keyword>
<keyword id="KW-0024">Alternative initiation</keyword>
<keyword id="KW-1003">Cell membrane</keyword>
<keyword id="KW-0150">Chloroplast</keyword>
<keyword id="KW-0408">Iron</keyword>
<keyword id="KW-0472">Membrane</keyword>
<keyword id="KW-0479">Metal-binding</keyword>
<keyword id="KW-0496">Mitochondrion</keyword>
<keyword id="KW-0520">NAD</keyword>
<keyword id="KW-0934">Plastid</keyword>
<keyword id="KW-1185">Reference proteome</keyword>
<keyword id="KW-0784">Thiamine biosynthesis</keyword>
<keyword id="KW-0808">Transferase</keyword>
<keyword id="KW-0809">Transit peptide</keyword>
<feature type="transit peptide" description="Chloroplast" evidence="1">
    <location>
        <begin position="1"/>
        <end position="45"/>
    </location>
</feature>
<feature type="chain" id="PRO_0000034060" description="Thiamine thiazole synthase, chloroplastic">
    <location>
        <begin position="46"/>
        <end position="349"/>
    </location>
</feature>
<feature type="binding site" evidence="6 16">
    <location>
        <position position="94"/>
    </location>
    <ligand>
        <name>substrate</name>
    </ligand>
</feature>
<feature type="binding site" evidence="6 16">
    <location>
        <begin position="114"/>
        <end position="115"/>
    </location>
    <ligand>
        <name>substrate</name>
    </ligand>
</feature>
<feature type="binding site" evidence="6 16">
    <location>
        <position position="122"/>
    </location>
    <ligand>
        <name>substrate</name>
    </ligand>
</feature>
<feature type="binding site" evidence="6 16">
    <location>
        <position position="187"/>
    </location>
    <ligand>
        <name>substrate</name>
    </ligand>
</feature>
<feature type="binding site" evidence="6 16">
    <location>
        <position position="218"/>
    </location>
    <ligand>
        <name>substrate</name>
    </ligand>
</feature>
<feature type="binding site" evidence="6 16">
    <location>
        <position position="233"/>
    </location>
    <ligand>
        <name>substrate</name>
    </ligand>
</feature>
<feature type="binding site" evidence="6 16">
    <location>
        <position position="285"/>
    </location>
    <ligand>
        <name>substrate</name>
    </ligand>
</feature>
<feature type="binding site" evidence="6 16">
    <location>
        <begin position="295"/>
        <end position="297"/>
    </location>
    <ligand>
        <name>substrate</name>
    </ligand>
</feature>
<feature type="modified residue" description="2,3-didehydroalanine (Cys)" evidence="9">
    <location>
        <position position="216"/>
    </location>
</feature>
<feature type="splice variant" id="VSP_044533" description="In isoform mitochondrial." evidence="15">
    <location>
        <begin position="1"/>
        <end position="69"/>
    </location>
</feature>
<feature type="mutagenesis site" description="No chloroplastic isoform produced." evidence="3">
    <original>M</original>
    <variation>I</variation>
    <location>
        <position position="1"/>
    </location>
</feature>
<feature type="mutagenesis site" description="No mitochondrial isoform produced." evidence="3">
    <original>M</original>
    <variation>I</variation>
    <location>
        <position position="70"/>
    </location>
</feature>
<feature type="mutagenesis site" description="No effect." evidence="6">
    <original>D</original>
    <variation>G</variation>
    <location>
        <position position="77"/>
    </location>
</feature>
<feature type="mutagenesis site" description="No effect." evidence="6">
    <original>D</original>
    <variation>G</variation>
    <location>
        <position position="85"/>
    </location>
</feature>
<feature type="mutagenesis site" description="Disrupts thiamine biosynthesis." evidence="6">
    <original>G</original>
    <variation>V</variation>
    <location>
        <position position="121"/>
    </location>
</feature>
<feature type="mutagenesis site" description="No effect." evidence="6">
    <original>W</original>
    <variation>L</variation>
    <location>
        <position position="124"/>
    </location>
</feature>
<feature type="mutagenesis site" description="No effect." evidence="6">
    <original>K</original>
    <variation>M</variation>
    <location>
        <position position="172"/>
    </location>
</feature>
<feature type="mutagenesis site" description="In tz-201; disrupts thiamine biosynthesis, decreases the overall protein stability and the speed of the catalytic activity, but has no effect on the octameric structure." evidence="4 6 11">
    <original>A</original>
    <variation>V</variation>
    <location>
        <position position="184"/>
    </location>
</feature>
<feature type="mutagenesis site" description="Disrupts thiamine biosynthesis and DNA damage tolerance activity." evidence="6">
    <original>H</original>
    <variation>F</variation>
    <location>
        <position position="211"/>
    </location>
</feature>
<feature type="mutagenesis site" description="Disrupts thiamine biosynthesis." evidence="6">
    <original>E</original>
    <variation>G</variation>
    <location>
        <position position="266"/>
    </location>
</feature>
<feature type="helix" evidence="17">
    <location>
        <begin position="63"/>
        <end position="81"/>
    </location>
</feature>
<feature type="strand" evidence="17">
    <location>
        <begin position="83"/>
        <end position="89"/>
    </location>
</feature>
<feature type="helix" evidence="17">
    <location>
        <begin position="93"/>
        <end position="103"/>
    </location>
</feature>
<feature type="strand" evidence="17">
    <location>
        <begin position="110"/>
        <end position="118"/>
    </location>
</feature>
<feature type="turn" evidence="17">
    <location>
        <begin position="121"/>
        <end position="124"/>
    </location>
</feature>
<feature type="strand" evidence="17">
    <location>
        <begin position="133"/>
        <end position="136"/>
    </location>
</feature>
<feature type="turn" evidence="17">
    <location>
        <begin position="137"/>
        <end position="139"/>
    </location>
</feature>
<feature type="helix" evidence="17">
    <location>
        <begin position="140"/>
        <end position="146"/>
    </location>
</feature>
<feature type="strand" evidence="17">
    <location>
        <begin position="154"/>
        <end position="160"/>
    </location>
</feature>
<feature type="helix" evidence="17">
    <location>
        <begin position="162"/>
        <end position="174"/>
    </location>
</feature>
<feature type="strand" evidence="17">
    <location>
        <begin position="179"/>
        <end position="183"/>
    </location>
</feature>
<feature type="strand" evidence="17">
    <location>
        <begin position="185"/>
        <end position="193"/>
    </location>
</feature>
<feature type="strand" evidence="17">
    <location>
        <begin position="196"/>
        <end position="204"/>
    </location>
</feature>
<feature type="helix" evidence="17">
    <location>
        <begin position="205"/>
        <end position="208"/>
    </location>
</feature>
<feature type="turn" evidence="17">
    <location>
        <begin position="211"/>
        <end position="213"/>
    </location>
</feature>
<feature type="strand" evidence="17">
    <location>
        <begin position="220"/>
        <end position="229"/>
    </location>
</feature>
<feature type="strand" evidence="17">
    <location>
        <begin position="233"/>
        <end position="235"/>
    </location>
</feature>
<feature type="turn" evidence="17">
    <location>
        <begin position="236"/>
        <end position="239"/>
    </location>
</feature>
<feature type="helix" evidence="17">
    <location>
        <begin position="240"/>
        <end position="247"/>
    </location>
</feature>
<feature type="strand" evidence="17">
    <location>
        <begin position="250"/>
        <end position="252"/>
    </location>
</feature>
<feature type="strand" evidence="17">
    <location>
        <begin position="258"/>
        <end position="260"/>
    </location>
</feature>
<feature type="helix" evidence="17">
    <location>
        <begin position="262"/>
        <end position="272"/>
    </location>
</feature>
<feature type="strand" evidence="17">
    <location>
        <begin position="274"/>
        <end position="277"/>
    </location>
</feature>
<feature type="strand" evidence="17">
    <location>
        <begin position="280"/>
        <end position="282"/>
    </location>
</feature>
<feature type="helix" evidence="17">
    <location>
        <begin position="285"/>
        <end position="291"/>
    </location>
</feature>
<feature type="helix" evidence="17">
    <location>
        <begin position="301"/>
        <end position="317"/>
    </location>
</feature>
<feature type="turn" evidence="17">
    <location>
        <begin position="323"/>
        <end position="326"/>
    </location>
</feature>
<proteinExistence type="evidence at protein level"/>
<name>THI4_ARATH</name>
<evidence type="ECO:0000255" key="1"/>
<evidence type="ECO:0000255" key="2">
    <source>
        <dbReference type="HAMAP-Rule" id="MF_03158"/>
    </source>
</evidence>
<evidence type="ECO:0000269" key="3">
    <source>
    </source>
</evidence>
<evidence type="ECO:0000269" key="4">
    <source>
    </source>
</evidence>
<evidence type="ECO:0000269" key="5">
    <source>
    </source>
</evidence>
<evidence type="ECO:0000269" key="6">
    <source>
    </source>
</evidence>
<evidence type="ECO:0000269" key="7">
    <source>
    </source>
</evidence>
<evidence type="ECO:0000269" key="8">
    <source>
    </source>
</evidence>
<evidence type="ECO:0000269" key="9">
    <source>
    </source>
</evidence>
<evidence type="ECO:0000269" key="10">
    <source>
    </source>
</evidence>
<evidence type="ECO:0000269" key="11">
    <source>
    </source>
</evidence>
<evidence type="ECO:0000269" key="12">
    <source>
    </source>
</evidence>
<evidence type="ECO:0000269" key="13">
    <source>
    </source>
</evidence>
<evidence type="ECO:0000269" key="14">
    <source>
    </source>
</evidence>
<evidence type="ECO:0000305" key="15"/>
<evidence type="ECO:0007744" key="16">
    <source>
        <dbReference type="PDB" id="1RP0"/>
    </source>
</evidence>
<evidence type="ECO:0007829" key="17">
    <source>
        <dbReference type="PDB" id="1RP0"/>
    </source>
</evidence>
<comment type="function">
    <text evidence="2 4 11 12 14">Involved in biosynthesis of the thiamine precursor thiazole. Catalyzes the conversion of NAD and glycine to adenosine diphosphate 5-(2-hydroxyethyl)-4-methylthiazole-2-carboxylic acid (ADT), an adenylated thiazole intermediate. The reaction includes an iron-dependent sulfide transfer from a conserved cysteine residue of the protein to a thiazole intermediate. The enzyme can only undergo a single turnover, which suggests it is a suicide enzyme. May have additional roles in adaptation to various stress conditions and in DNA damage tolerance. Acts as a positive regulator for the abscisic acid-induced activation of slow type anion channels during stomatal closure by repressing CPK33 kinase activity.</text>
</comment>
<comment type="catalytic activity">
    <reaction evidence="14">
        <text>[ADP-thiazole synthase]-L-cysteine + glycine + NAD(+) = [ADP-thiazole synthase]-dehydroalanine + ADP-5-ethyl-4-methylthiazole-2-carboxylate + nicotinamide + 3 H2O + 2 H(+)</text>
        <dbReference type="Rhea" id="RHEA:55708"/>
        <dbReference type="Rhea" id="RHEA-COMP:14264"/>
        <dbReference type="Rhea" id="RHEA-COMP:14265"/>
        <dbReference type="ChEBI" id="CHEBI:15377"/>
        <dbReference type="ChEBI" id="CHEBI:15378"/>
        <dbReference type="ChEBI" id="CHEBI:17154"/>
        <dbReference type="ChEBI" id="CHEBI:29950"/>
        <dbReference type="ChEBI" id="CHEBI:57305"/>
        <dbReference type="ChEBI" id="CHEBI:57540"/>
        <dbReference type="ChEBI" id="CHEBI:90873"/>
        <dbReference type="ChEBI" id="CHEBI:139151"/>
        <dbReference type="EC" id="2.4.2.60"/>
    </reaction>
</comment>
<comment type="cofactor">
    <cofactor evidence="2">
        <name>Fe cation</name>
        <dbReference type="ChEBI" id="CHEBI:24875"/>
    </cofactor>
    <text evidence="2">Binds 1 Fe cation per subunit.</text>
</comment>
<comment type="subunit">
    <text evidence="6 8 11 12">Homooctamer (PubMed:16912043, PubMed:24637331). Interacts with RBCX1 and RBCX1 (PubMed:21922322). Interacts with CPK33 (PubMed:26662273).</text>
</comment>
<comment type="subcellular location">
    <subcellularLocation>
        <location evidence="3 7 12">Plastid</location>
        <location evidence="3 7 12">Chloroplast</location>
    </subcellularLocation>
    <subcellularLocation>
        <location evidence="3">Mitochondrion</location>
    </subcellularLocation>
    <subcellularLocation>
        <location evidence="12">Cell membrane</location>
    </subcellularLocation>
</comment>
<comment type="alternative products">
    <event type="alternative initiation"/>
    <isoform>
        <id>Q38814-1</id>
        <name>chloroplastic</name>
        <sequence type="displayed"/>
    </isoform>
    <isoform>
        <id>Q38814-2</id>
        <name>mitochondrial</name>
        <sequence type="described" ref="VSP_044533"/>
    </isoform>
</comment>
<comment type="tissue specificity">
    <text evidence="4 5 12 13">Expressed at high levels in chloroplast-containing parenchymatic cells of leaves, inflorescence shoots and flowers, and at lower levels in the vascular system (PubMed:8771789). In young plants, detected in roots and shoots including cotyledons, leaves and hypocotyls (PubMed:12941878). Also observed in apical meristematic regions, siliques and embryos (PubMed:15897230). Low expression in roots, limited to the vascular tissue (PubMed:15897230). Broadly expressed in roots, cotyledons, leaves, hypocotyls, inflorescences, siliques, and strongly in guard cells (PubMed:26662273).</text>
</comment>
<comment type="developmental stage">
    <text evidence="5">Expressed throughout development.</text>
</comment>
<comment type="induction">
    <text evidence="4 5 10 12">Up-regulated by osmotic stress, sugar deprivation, high salinity, and hypoxia (PubMed:15897230, PubMed:22214485). Up-regulated by abscisic acid treatment and drought stress (PubMed:22214485, PubMed:26662273). No effect of thiamine, salicylic acid or paraquat treatments (PubMed:12941878, PubMed:22214485). Down-regulated by dark incubation (PubMed:12941878).</text>
</comment>
<comment type="PTM">
    <text evidence="9 11 12">During the catalytic reaction, a sulfide is transferred from Cys-216 to a reaction intermediate, generating a dehydroalanine residue (PubMed:22031445, PubMed:24637331). Not phosphorylated in vitro by CPK33 (PubMed:26662273).</text>
</comment>
<comment type="miscellaneous">
    <molecule>Isoform mitochondrial</molecule>
    <text evidence="3">Mitochondrial precursor. Contains a mitochondrial presequence-like structure at its N-terminus.</text>
</comment>
<comment type="similarity">
    <text evidence="2">Belongs to the THI4 family.</text>
</comment>